<reference key="1">
    <citation type="submission" date="2007-02" db="EMBL/GenBank/DDBJ databases">
        <title>Complete sequence of chromosome of Yersinia pestis Pestoides F.</title>
        <authorList>
            <consortium name="US DOE Joint Genome Institute"/>
            <person name="Copeland A."/>
            <person name="Lucas S."/>
            <person name="Lapidus A."/>
            <person name="Barry K."/>
            <person name="Detter J.C."/>
            <person name="Glavina del Rio T."/>
            <person name="Hammon N."/>
            <person name="Israni S."/>
            <person name="Dalin E."/>
            <person name="Tice H."/>
            <person name="Pitluck S."/>
            <person name="Di Bartolo G."/>
            <person name="Chain P."/>
            <person name="Malfatti S."/>
            <person name="Shin M."/>
            <person name="Vergez L."/>
            <person name="Schmutz J."/>
            <person name="Larimer F."/>
            <person name="Land M."/>
            <person name="Hauser L."/>
            <person name="Worsham P."/>
            <person name="Chu M."/>
            <person name="Bearden S."/>
            <person name="Garcia E."/>
            <person name="Richardson P."/>
        </authorList>
    </citation>
    <scope>NUCLEOTIDE SEQUENCE [LARGE SCALE GENOMIC DNA]</scope>
    <source>
        <strain>Pestoides F</strain>
    </source>
</reference>
<dbReference type="EMBL" id="CP000668">
    <property type="protein sequence ID" value="ABP40237.1"/>
    <property type="molecule type" value="Genomic_DNA"/>
</dbReference>
<dbReference type="RefSeq" id="WP_002210931.1">
    <property type="nucleotide sequence ID" value="NZ_CP009715.1"/>
</dbReference>
<dbReference type="SMR" id="A4TLS5"/>
<dbReference type="GeneID" id="97455787"/>
<dbReference type="KEGG" id="ypp:YPDSF_1852"/>
<dbReference type="PATRIC" id="fig|386656.14.peg.3307"/>
<dbReference type="GO" id="GO:0015934">
    <property type="term" value="C:large ribosomal subunit"/>
    <property type="evidence" value="ECO:0007669"/>
    <property type="project" value="InterPro"/>
</dbReference>
<dbReference type="GO" id="GO:0003735">
    <property type="term" value="F:structural constituent of ribosome"/>
    <property type="evidence" value="ECO:0007669"/>
    <property type="project" value="InterPro"/>
</dbReference>
<dbReference type="GO" id="GO:0006412">
    <property type="term" value="P:translation"/>
    <property type="evidence" value="ECO:0007669"/>
    <property type="project" value="UniProtKB-UniRule"/>
</dbReference>
<dbReference type="HAMAP" id="MF_00340">
    <property type="entry name" value="Ribosomal_bL32"/>
    <property type="match status" value="1"/>
</dbReference>
<dbReference type="InterPro" id="IPR002677">
    <property type="entry name" value="Ribosomal_bL32"/>
</dbReference>
<dbReference type="InterPro" id="IPR044957">
    <property type="entry name" value="Ribosomal_bL32_bact"/>
</dbReference>
<dbReference type="InterPro" id="IPR011332">
    <property type="entry name" value="Ribosomal_zn-bd"/>
</dbReference>
<dbReference type="NCBIfam" id="TIGR01031">
    <property type="entry name" value="rpmF_bact"/>
    <property type="match status" value="1"/>
</dbReference>
<dbReference type="PANTHER" id="PTHR35534">
    <property type="entry name" value="50S RIBOSOMAL PROTEIN L32"/>
    <property type="match status" value="1"/>
</dbReference>
<dbReference type="PANTHER" id="PTHR35534:SF1">
    <property type="entry name" value="LARGE RIBOSOMAL SUBUNIT PROTEIN BL32"/>
    <property type="match status" value="1"/>
</dbReference>
<dbReference type="Pfam" id="PF01783">
    <property type="entry name" value="Ribosomal_L32p"/>
    <property type="match status" value="1"/>
</dbReference>
<dbReference type="SUPFAM" id="SSF57829">
    <property type="entry name" value="Zn-binding ribosomal proteins"/>
    <property type="match status" value="1"/>
</dbReference>
<name>RL32_YERPP</name>
<sequence length="55" mass="6176">MAVQQNKPTRSKRGMRRSHDALTTATLSVDKTSGETHLRHHITADGFYRGRKVIG</sequence>
<feature type="chain" id="PRO_0000296602" description="Large ribosomal subunit protein bL32">
    <location>
        <begin position="1"/>
        <end position="55"/>
    </location>
</feature>
<feature type="region of interest" description="Disordered" evidence="2">
    <location>
        <begin position="1"/>
        <end position="27"/>
    </location>
</feature>
<accession>A4TLS5</accession>
<gene>
    <name evidence="1" type="primary">rpmF</name>
    <name type="ordered locus">YPDSF_1852</name>
</gene>
<protein>
    <recommendedName>
        <fullName evidence="1">Large ribosomal subunit protein bL32</fullName>
    </recommendedName>
    <alternativeName>
        <fullName evidence="3">50S ribosomal protein L32</fullName>
    </alternativeName>
</protein>
<proteinExistence type="inferred from homology"/>
<keyword id="KW-0687">Ribonucleoprotein</keyword>
<keyword id="KW-0689">Ribosomal protein</keyword>
<organism>
    <name type="scientific">Yersinia pestis (strain Pestoides F)</name>
    <dbReference type="NCBI Taxonomy" id="386656"/>
    <lineage>
        <taxon>Bacteria</taxon>
        <taxon>Pseudomonadati</taxon>
        <taxon>Pseudomonadota</taxon>
        <taxon>Gammaproteobacteria</taxon>
        <taxon>Enterobacterales</taxon>
        <taxon>Yersiniaceae</taxon>
        <taxon>Yersinia</taxon>
    </lineage>
</organism>
<evidence type="ECO:0000255" key="1">
    <source>
        <dbReference type="HAMAP-Rule" id="MF_00340"/>
    </source>
</evidence>
<evidence type="ECO:0000256" key="2">
    <source>
        <dbReference type="SAM" id="MobiDB-lite"/>
    </source>
</evidence>
<evidence type="ECO:0000305" key="3"/>
<comment type="similarity">
    <text evidence="1">Belongs to the bacterial ribosomal protein bL32 family.</text>
</comment>